<comment type="function">
    <text evidence="1">RuBisCO catalyzes two reactions: the carboxylation of D-ribulose 1,5-bisphosphate, the primary event in carbon dioxide fixation, as well as the oxidative fragmentation of the pentose substrate in the photorespiration process. Both reactions occur simultaneously and in competition at the same active site.</text>
</comment>
<comment type="catalytic activity">
    <reaction evidence="1">
        <text>2 (2R)-3-phosphoglycerate + 2 H(+) = D-ribulose 1,5-bisphosphate + CO2 + H2O</text>
        <dbReference type="Rhea" id="RHEA:23124"/>
        <dbReference type="ChEBI" id="CHEBI:15377"/>
        <dbReference type="ChEBI" id="CHEBI:15378"/>
        <dbReference type="ChEBI" id="CHEBI:16526"/>
        <dbReference type="ChEBI" id="CHEBI:57870"/>
        <dbReference type="ChEBI" id="CHEBI:58272"/>
        <dbReference type="EC" id="4.1.1.39"/>
    </reaction>
</comment>
<comment type="catalytic activity">
    <reaction evidence="1">
        <text>D-ribulose 1,5-bisphosphate + O2 = 2-phosphoglycolate + (2R)-3-phosphoglycerate + 2 H(+)</text>
        <dbReference type="Rhea" id="RHEA:36631"/>
        <dbReference type="ChEBI" id="CHEBI:15378"/>
        <dbReference type="ChEBI" id="CHEBI:15379"/>
        <dbReference type="ChEBI" id="CHEBI:57870"/>
        <dbReference type="ChEBI" id="CHEBI:58033"/>
        <dbReference type="ChEBI" id="CHEBI:58272"/>
    </reaction>
</comment>
<comment type="cofactor">
    <cofactor evidence="1">
        <name>Mg(2+)</name>
        <dbReference type="ChEBI" id="CHEBI:18420"/>
    </cofactor>
    <text evidence="1">Binds 1 Mg(2+) ion per subunit.</text>
</comment>
<comment type="subunit">
    <text evidence="1">Heterohexadecamer of 8 large chains and 8 small chains; disulfide-linked. The disulfide link is formed within the large subunit homodimers.</text>
</comment>
<comment type="subcellular location">
    <subcellularLocation>
        <location>Plastid</location>
        <location>Chloroplast</location>
    </subcellularLocation>
</comment>
<comment type="PTM">
    <text evidence="1">The disulfide bond which can form in the large chain dimeric partners within the hexadecamer appears to be associated with oxidative stress and protein turnover.</text>
</comment>
<comment type="miscellaneous">
    <text evidence="1">The basic functional RuBisCO is composed of a large chain homodimer in a 'head-to-tail' conformation. In form I RuBisCO this homodimer is arranged in a barrel-like tetramer with the small subunits forming a tetrameric 'cap' on each end of the 'barrel'.</text>
</comment>
<comment type="similarity">
    <text evidence="1">Belongs to the RuBisCO large chain family. Type I subfamily.</text>
</comment>
<organism>
    <name type="scientific">Combretum indicum</name>
    <name type="common">Rangoon creeper</name>
    <name type="synonym">Quisqualis indica</name>
    <dbReference type="NCBI Taxonomy" id="3956"/>
    <lineage>
        <taxon>Eukaryota</taxon>
        <taxon>Viridiplantae</taxon>
        <taxon>Streptophyta</taxon>
        <taxon>Embryophyta</taxon>
        <taxon>Tracheophyta</taxon>
        <taxon>Spermatophyta</taxon>
        <taxon>Magnoliopsida</taxon>
        <taxon>eudicotyledons</taxon>
        <taxon>Gunneridae</taxon>
        <taxon>Pentapetalae</taxon>
        <taxon>rosids</taxon>
        <taxon>malvids</taxon>
        <taxon>Myrtales</taxon>
        <taxon>Combretaceae</taxon>
        <taxon>Combretum</taxon>
    </lineage>
</organism>
<name>RBL_COMID</name>
<keyword id="KW-0113">Calvin cycle</keyword>
<keyword id="KW-0120">Carbon dioxide fixation</keyword>
<keyword id="KW-0150">Chloroplast</keyword>
<keyword id="KW-1015">Disulfide bond</keyword>
<keyword id="KW-0456">Lyase</keyword>
<keyword id="KW-0460">Magnesium</keyword>
<keyword id="KW-0479">Metal-binding</keyword>
<keyword id="KW-0488">Methylation</keyword>
<keyword id="KW-0503">Monooxygenase</keyword>
<keyword id="KW-0560">Oxidoreductase</keyword>
<keyword id="KW-0601">Photorespiration</keyword>
<keyword id="KW-0602">Photosynthesis</keyword>
<keyword id="KW-0934">Plastid</keyword>
<evidence type="ECO:0000255" key="1">
    <source>
        <dbReference type="HAMAP-Rule" id="MF_01338"/>
    </source>
</evidence>
<feature type="chain" id="PRO_0000062580" description="Ribulose bisphosphate carboxylase large chain">
    <location>
        <begin position="1" status="less than"/>
        <end position="465"/>
    </location>
</feature>
<feature type="active site" description="Proton acceptor" evidence="1">
    <location>
        <position position="165"/>
    </location>
</feature>
<feature type="active site" description="Proton acceptor" evidence="1">
    <location>
        <position position="284"/>
    </location>
</feature>
<feature type="binding site" description="in homodimeric partner" evidence="1">
    <location>
        <position position="113"/>
    </location>
    <ligand>
        <name>substrate</name>
    </ligand>
</feature>
<feature type="binding site" evidence="1">
    <location>
        <position position="163"/>
    </location>
    <ligand>
        <name>substrate</name>
    </ligand>
</feature>
<feature type="binding site" evidence="1">
    <location>
        <position position="167"/>
    </location>
    <ligand>
        <name>substrate</name>
    </ligand>
</feature>
<feature type="binding site" description="via carbamate group" evidence="1">
    <location>
        <position position="191"/>
    </location>
    <ligand>
        <name>Mg(2+)</name>
        <dbReference type="ChEBI" id="CHEBI:18420"/>
    </ligand>
</feature>
<feature type="binding site" evidence="1">
    <location>
        <position position="193"/>
    </location>
    <ligand>
        <name>Mg(2+)</name>
        <dbReference type="ChEBI" id="CHEBI:18420"/>
    </ligand>
</feature>
<feature type="binding site" evidence="1">
    <location>
        <position position="194"/>
    </location>
    <ligand>
        <name>Mg(2+)</name>
        <dbReference type="ChEBI" id="CHEBI:18420"/>
    </ligand>
</feature>
<feature type="binding site" evidence="1">
    <location>
        <position position="285"/>
    </location>
    <ligand>
        <name>substrate</name>
    </ligand>
</feature>
<feature type="binding site" evidence="1">
    <location>
        <position position="317"/>
    </location>
    <ligand>
        <name>substrate</name>
    </ligand>
</feature>
<feature type="binding site" evidence="1">
    <location>
        <position position="369"/>
    </location>
    <ligand>
        <name>substrate</name>
    </ligand>
</feature>
<feature type="site" description="Transition state stabilizer" evidence="1">
    <location>
        <position position="324"/>
    </location>
</feature>
<feature type="modified residue" description="N6,N6,N6-trimethyllysine" evidence="1">
    <location>
        <position position="4"/>
    </location>
</feature>
<feature type="modified residue" description="N6-carboxylysine" evidence="1">
    <location>
        <position position="191"/>
    </location>
</feature>
<feature type="disulfide bond" description="Interchain; in linked form" evidence="1">
    <location>
        <position position="237"/>
    </location>
</feature>
<feature type="non-terminal residue">
    <location>
        <position position="1"/>
    </location>
</feature>
<proteinExistence type="inferred from homology"/>
<accession>P28446</accession>
<reference key="1">
    <citation type="journal article" date="1992" name="Science">
        <title>Carnivorous plants: phylogeny and structural evolution.</title>
        <authorList>
            <person name="Albert V.A."/>
            <person name="Williams S.E."/>
            <person name="Chase M.W."/>
        </authorList>
    </citation>
    <scope>NUCLEOTIDE SEQUENCE [GENOMIC DNA]</scope>
</reference>
<dbReference type="EC" id="4.1.1.39" evidence="1"/>
<dbReference type="EMBL" id="L01948">
    <property type="protein sequence ID" value="AAA84580.2"/>
    <property type="molecule type" value="Genomic_DNA"/>
</dbReference>
<dbReference type="SMR" id="P28446"/>
<dbReference type="GO" id="GO:0009507">
    <property type="term" value="C:chloroplast"/>
    <property type="evidence" value="ECO:0007669"/>
    <property type="project" value="UniProtKB-SubCell"/>
</dbReference>
<dbReference type="GO" id="GO:0000287">
    <property type="term" value="F:magnesium ion binding"/>
    <property type="evidence" value="ECO:0007669"/>
    <property type="project" value="InterPro"/>
</dbReference>
<dbReference type="GO" id="GO:0004497">
    <property type="term" value="F:monooxygenase activity"/>
    <property type="evidence" value="ECO:0007669"/>
    <property type="project" value="UniProtKB-KW"/>
</dbReference>
<dbReference type="GO" id="GO:0016984">
    <property type="term" value="F:ribulose-bisphosphate carboxylase activity"/>
    <property type="evidence" value="ECO:0007669"/>
    <property type="project" value="UniProtKB-EC"/>
</dbReference>
<dbReference type="GO" id="GO:0009853">
    <property type="term" value="P:photorespiration"/>
    <property type="evidence" value="ECO:0007669"/>
    <property type="project" value="UniProtKB-KW"/>
</dbReference>
<dbReference type="GO" id="GO:0019253">
    <property type="term" value="P:reductive pentose-phosphate cycle"/>
    <property type="evidence" value="ECO:0007669"/>
    <property type="project" value="UniProtKB-KW"/>
</dbReference>
<dbReference type="CDD" id="cd08212">
    <property type="entry name" value="RuBisCO_large_I"/>
    <property type="match status" value="1"/>
</dbReference>
<dbReference type="FunFam" id="3.20.20.110:FF:000001">
    <property type="entry name" value="Ribulose bisphosphate carboxylase large chain"/>
    <property type="match status" value="1"/>
</dbReference>
<dbReference type="FunFam" id="3.30.70.150:FF:000001">
    <property type="entry name" value="Ribulose bisphosphate carboxylase large chain"/>
    <property type="match status" value="1"/>
</dbReference>
<dbReference type="Gene3D" id="3.20.20.110">
    <property type="entry name" value="Ribulose bisphosphate carboxylase, large subunit, C-terminal domain"/>
    <property type="match status" value="1"/>
</dbReference>
<dbReference type="Gene3D" id="3.30.70.150">
    <property type="entry name" value="RuBisCO large subunit, N-terminal domain"/>
    <property type="match status" value="1"/>
</dbReference>
<dbReference type="HAMAP" id="MF_01338">
    <property type="entry name" value="RuBisCO_L_type1"/>
    <property type="match status" value="1"/>
</dbReference>
<dbReference type="InterPro" id="IPR033966">
    <property type="entry name" value="RuBisCO"/>
</dbReference>
<dbReference type="InterPro" id="IPR020878">
    <property type="entry name" value="RuBisCo_large_chain_AS"/>
</dbReference>
<dbReference type="InterPro" id="IPR000685">
    <property type="entry name" value="RuBisCO_lsu_C"/>
</dbReference>
<dbReference type="InterPro" id="IPR036376">
    <property type="entry name" value="RuBisCO_lsu_C_sf"/>
</dbReference>
<dbReference type="InterPro" id="IPR017443">
    <property type="entry name" value="RuBisCO_lsu_fd_N"/>
</dbReference>
<dbReference type="InterPro" id="IPR036422">
    <property type="entry name" value="RuBisCO_lsu_N_sf"/>
</dbReference>
<dbReference type="InterPro" id="IPR020888">
    <property type="entry name" value="RuBisCO_lsuI"/>
</dbReference>
<dbReference type="NCBIfam" id="NF003252">
    <property type="entry name" value="PRK04208.1"/>
    <property type="match status" value="1"/>
</dbReference>
<dbReference type="PANTHER" id="PTHR42704">
    <property type="entry name" value="RIBULOSE BISPHOSPHATE CARBOXYLASE"/>
    <property type="match status" value="1"/>
</dbReference>
<dbReference type="PANTHER" id="PTHR42704:SF15">
    <property type="entry name" value="RIBULOSE BISPHOSPHATE CARBOXYLASE LARGE CHAIN"/>
    <property type="match status" value="1"/>
</dbReference>
<dbReference type="Pfam" id="PF00016">
    <property type="entry name" value="RuBisCO_large"/>
    <property type="match status" value="1"/>
</dbReference>
<dbReference type="Pfam" id="PF02788">
    <property type="entry name" value="RuBisCO_large_N"/>
    <property type="match status" value="1"/>
</dbReference>
<dbReference type="SFLD" id="SFLDG01052">
    <property type="entry name" value="RuBisCO"/>
    <property type="match status" value="1"/>
</dbReference>
<dbReference type="SFLD" id="SFLDS00014">
    <property type="entry name" value="RuBisCO"/>
    <property type="match status" value="1"/>
</dbReference>
<dbReference type="SFLD" id="SFLDG00301">
    <property type="entry name" value="RuBisCO-like_proteins"/>
    <property type="match status" value="1"/>
</dbReference>
<dbReference type="SUPFAM" id="SSF51649">
    <property type="entry name" value="RuBisCo, C-terminal domain"/>
    <property type="match status" value="1"/>
</dbReference>
<dbReference type="SUPFAM" id="SSF54966">
    <property type="entry name" value="RuBisCO, large subunit, small (N-terminal) domain"/>
    <property type="match status" value="1"/>
</dbReference>
<dbReference type="PROSITE" id="PS00157">
    <property type="entry name" value="RUBISCO_LARGE"/>
    <property type="match status" value="1"/>
</dbReference>
<geneLocation type="chloroplast"/>
<protein>
    <recommendedName>
        <fullName evidence="1">Ribulose bisphosphate carboxylase large chain</fullName>
        <shortName evidence="1">RuBisCO large subunit</shortName>
        <ecNumber evidence="1">4.1.1.39</ecNumber>
    </recommendedName>
</protein>
<gene>
    <name evidence="1" type="primary">rbcL</name>
</gene>
<sequence>VGFKAGVKDYKLTYYTPDYQTKDTDILAAFRVTPQPGVPPEEAGAAVAAESSTGTWTTVWTDGLTSLDRYKGRCYHIEPVAGEENQYICYVAYPLDLFEEGSVTNMFTSIVGNVFGFKALRALRLEDLRIPTAYIKTFQGPPHGIQVERDKLNKYGRPLLGCTIKPKLGLSAKNYGRAVYECLRGGLDFTKDDENVNSQPFMRWRDRFLFCAEGIYKAQAETGEIKGHYLNATAGTCEEMIKRAVFARELGAPIVMHDYLTGGFTANTSLAHYCWDNGLLLHIHRAMHAVIDRQKNHGMHFRVLAKALRMSGGDHIHAGTVVGKLEGEREITLGFVDLLRDDYIEKDRSRGIYFTQDWVSLPGVIPVASGGIHVWHMPALTEIFGDDSVLQFGGGTLGHPWGNAPGAVANRVALEACVQARNEGRNLAREGNEIIREASKWSPELAAACEVWKEIKFEFEAMDTL</sequence>